<protein>
    <recommendedName>
        <fullName>Insulin-like growth factor 2 mRNA-binding protein 3</fullName>
        <shortName>IGF2 mRNA-binding protein 3</shortName>
        <shortName>IMP-3</shortName>
        <shortName>mIMP-3</shortName>
    </recommendedName>
    <alternativeName>
        <fullName>IGF-II mRNA-binding protein 3</fullName>
    </alternativeName>
    <alternativeName>
        <fullName>VICKZ family member 3</fullName>
    </alternativeName>
</protein>
<reference key="1">
    <citation type="journal article" date="2005" name="Science">
        <title>The transcriptional landscape of the mammalian genome.</title>
        <authorList>
            <person name="Carninci P."/>
            <person name="Kasukawa T."/>
            <person name="Katayama S."/>
            <person name="Gough J."/>
            <person name="Frith M.C."/>
            <person name="Maeda N."/>
            <person name="Oyama R."/>
            <person name="Ravasi T."/>
            <person name="Lenhard B."/>
            <person name="Wells C."/>
            <person name="Kodzius R."/>
            <person name="Shimokawa K."/>
            <person name="Bajic V.B."/>
            <person name="Brenner S.E."/>
            <person name="Batalov S."/>
            <person name="Forrest A.R."/>
            <person name="Zavolan M."/>
            <person name="Davis M.J."/>
            <person name="Wilming L.G."/>
            <person name="Aidinis V."/>
            <person name="Allen J.E."/>
            <person name="Ambesi-Impiombato A."/>
            <person name="Apweiler R."/>
            <person name="Aturaliya R.N."/>
            <person name="Bailey T.L."/>
            <person name="Bansal M."/>
            <person name="Baxter L."/>
            <person name="Beisel K.W."/>
            <person name="Bersano T."/>
            <person name="Bono H."/>
            <person name="Chalk A.M."/>
            <person name="Chiu K.P."/>
            <person name="Choudhary V."/>
            <person name="Christoffels A."/>
            <person name="Clutterbuck D.R."/>
            <person name="Crowe M.L."/>
            <person name="Dalla E."/>
            <person name="Dalrymple B.P."/>
            <person name="de Bono B."/>
            <person name="Della Gatta G."/>
            <person name="di Bernardo D."/>
            <person name="Down T."/>
            <person name="Engstrom P."/>
            <person name="Fagiolini M."/>
            <person name="Faulkner G."/>
            <person name="Fletcher C.F."/>
            <person name="Fukushima T."/>
            <person name="Furuno M."/>
            <person name="Futaki S."/>
            <person name="Gariboldi M."/>
            <person name="Georgii-Hemming P."/>
            <person name="Gingeras T.R."/>
            <person name="Gojobori T."/>
            <person name="Green R.E."/>
            <person name="Gustincich S."/>
            <person name="Harbers M."/>
            <person name="Hayashi Y."/>
            <person name="Hensch T.K."/>
            <person name="Hirokawa N."/>
            <person name="Hill D."/>
            <person name="Huminiecki L."/>
            <person name="Iacono M."/>
            <person name="Ikeo K."/>
            <person name="Iwama A."/>
            <person name="Ishikawa T."/>
            <person name="Jakt M."/>
            <person name="Kanapin A."/>
            <person name="Katoh M."/>
            <person name="Kawasawa Y."/>
            <person name="Kelso J."/>
            <person name="Kitamura H."/>
            <person name="Kitano H."/>
            <person name="Kollias G."/>
            <person name="Krishnan S.P."/>
            <person name="Kruger A."/>
            <person name="Kummerfeld S.K."/>
            <person name="Kurochkin I.V."/>
            <person name="Lareau L.F."/>
            <person name="Lazarevic D."/>
            <person name="Lipovich L."/>
            <person name="Liu J."/>
            <person name="Liuni S."/>
            <person name="McWilliam S."/>
            <person name="Madan Babu M."/>
            <person name="Madera M."/>
            <person name="Marchionni L."/>
            <person name="Matsuda H."/>
            <person name="Matsuzawa S."/>
            <person name="Miki H."/>
            <person name="Mignone F."/>
            <person name="Miyake S."/>
            <person name="Morris K."/>
            <person name="Mottagui-Tabar S."/>
            <person name="Mulder N."/>
            <person name="Nakano N."/>
            <person name="Nakauchi H."/>
            <person name="Ng P."/>
            <person name="Nilsson R."/>
            <person name="Nishiguchi S."/>
            <person name="Nishikawa S."/>
            <person name="Nori F."/>
            <person name="Ohara O."/>
            <person name="Okazaki Y."/>
            <person name="Orlando V."/>
            <person name="Pang K.C."/>
            <person name="Pavan W.J."/>
            <person name="Pavesi G."/>
            <person name="Pesole G."/>
            <person name="Petrovsky N."/>
            <person name="Piazza S."/>
            <person name="Reed J."/>
            <person name="Reid J.F."/>
            <person name="Ring B.Z."/>
            <person name="Ringwald M."/>
            <person name="Rost B."/>
            <person name="Ruan Y."/>
            <person name="Salzberg S.L."/>
            <person name="Sandelin A."/>
            <person name="Schneider C."/>
            <person name="Schoenbach C."/>
            <person name="Sekiguchi K."/>
            <person name="Semple C.A."/>
            <person name="Seno S."/>
            <person name="Sessa L."/>
            <person name="Sheng Y."/>
            <person name="Shibata Y."/>
            <person name="Shimada H."/>
            <person name="Shimada K."/>
            <person name="Silva D."/>
            <person name="Sinclair B."/>
            <person name="Sperling S."/>
            <person name="Stupka E."/>
            <person name="Sugiura K."/>
            <person name="Sultana R."/>
            <person name="Takenaka Y."/>
            <person name="Taki K."/>
            <person name="Tammoja K."/>
            <person name="Tan S.L."/>
            <person name="Tang S."/>
            <person name="Taylor M.S."/>
            <person name="Tegner J."/>
            <person name="Teichmann S.A."/>
            <person name="Ueda H.R."/>
            <person name="van Nimwegen E."/>
            <person name="Verardo R."/>
            <person name="Wei C.L."/>
            <person name="Yagi K."/>
            <person name="Yamanishi H."/>
            <person name="Zabarovsky E."/>
            <person name="Zhu S."/>
            <person name="Zimmer A."/>
            <person name="Hide W."/>
            <person name="Bult C."/>
            <person name="Grimmond S.M."/>
            <person name="Teasdale R.D."/>
            <person name="Liu E.T."/>
            <person name="Brusic V."/>
            <person name="Quackenbush J."/>
            <person name="Wahlestedt C."/>
            <person name="Mattick J.S."/>
            <person name="Hume D.A."/>
            <person name="Kai C."/>
            <person name="Sasaki D."/>
            <person name="Tomaru Y."/>
            <person name="Fukuda S."/>
            <person name="Kanamori-Katayama M."/>
            <person name="Suzuki M."/>
            <person name="Aoki J."/>
            <person name="Arakawa T."/>
            <person name="Iida J."/>
            <person name="Imamura K."/>
            <person name="Itoh M."/>
            <person name="Kato T."/>
            <person name="Kawaji H."/>
            <person name="Kawagashira N."/>
            <person name="Kawashima T."/>
            <person name="Kojima M."/>
            <person name="Kondo S."/>
            <person name="Konno H."/>
            <person name="Nakano K."/>
            <person name="Ninomiya N."/>
            <person name="Nishio T."/>
            <person name="Okada M."/>
            <person name="Plessy C."/>
            <person name="Shibata K."/>
            <person name="Shiraki T."/>
            <person name="Suzuki S."/>
            <person name="Tagami M."/>
            <person name="Waki K."/>
            <person name="Watahiki A."/>
            <person name="Okamura-Oho Y."/>
            <person name="Suzuki H."/>
            <person name="Kawai J."/>
            <person name="Hayashizaki Y."/>
        </authorList>
    </citation>
    <scope>NUCLEOTIDE SEQUENCE [LARGE SCALE MRNA]</scope>
    <source>
        <strain>C57BL/6J</strain>
        <strain>NOD</strain>
        <tissue>Kidney</tissue>
        <tissue>Thymus</tissue>
    </source>
</reference>
<reference key="2">
    <citation type="journal article" date="2004" name="Genome Res.">
        <title>The status, quality, and expansion of the NIH full-length cDNA project: the Mammalian Gene Collection (MGC).</title>
        <authorList>
            <consortium name="The MGC Project Team"/>
        </authorList>
    </citation>
    <scope>NUCLEOTIDE SEQUENCE [LARGE SCALE MRNA]</scope>
    <source>
        <strain>C57BL/6J</strain>
        <tissue>Brain</tissue>
        <tissue>Olfactory epithelium</tissue>
    </source>
</reference>
<reference key="3">
    <citation type="journal article" date="1999" name="Mech. Dev.">
        <title>Expression of the highly conserved RNA binding protein KOC in embryogenesis.</title>
        <authorList>
            <person name="Mueller-Pillasch F."/>
            <person name="Pohl B."/>
            <person name="Wilda M."/>
            <person name="Lacher U."/>
            <person name="Beil M."/>
            <person name="Wallrapp C."/>
            <person name="Hameister H."/>
            <person name="Knoechel W."/>
            <person name="Adler G."/>
            <person name="Gress T.M."/>
        </authorList>
    </citation>
    <scope>TISSUE SPECIFICITY</scope>
</reference>
<reference key="4">
    <citation type="journal article" date="1999" name="Mol. Cell. Biol.">
        <title>A family of insulin-like growth factor II mRNA-binding proteins represses translation in late development.</title>
        <authorList>
            <person name="Nielsen J."/>
            <person name="Christiansen J."/>
            <person name="Lykke-Andersen J."/>
            <person name="Johnsen A.H."/>
            <person name="Wewer U.M."/>
            <person name="Nielsen F.C."/>
        </authorList>
    </citation>
    <scope>DEVELOPMENTAL STAGE</scope>
</reference>
<reference key="5">
    <citation type="journal article" date="2000" name="J. Biol. Chem.">
        <title>H19 RNA binds four molecules of insulin-like growth factor II mRNA-binding protein.</title>
        <authorList>
            <person name="Runge S."/>
            <person name="Nielsen F.C."/>
            <person name="Nielsen J."/>
            <person name="Lykke-Andersen J."/>
            <person name="Wewer U.M."/>
            <person name="Christiansen J."/>
        </authorList>
    </citation>
    <scope>DEVELOPMENTAL STAGE</scope>
</reference>
<reference key="6">
    <citation type="journal article" date="2001" name="J. Neurosci. Res.">
        <title>Expression of mouse igf2 mRNA-binding protein 3 and its implications for the developing central nervous system.</title>
        <authorList>
            <person name="Mori H."/>
            <person name="Sakakibara S."/>
            <person name="Imai T."/>
            <person name="Nakamura Y."/>
            <person name="Iijima T."/>
            <person name="Suzuki A."/>
            <person name="Yuasa Y."/>
            <person name="Takeda M."/>
            <person name="Okano H."/>
        </authorList>
    </citation>
    <scope>SUBCELLULAR LOCATION</scope>
    <scope>DEVELOPMENTAL STAGE</scope>
    <scope>RNA-BINDING</scope>
</reference>
<reference key="7">
    <citation type="journal article" date="2002" name="J. Med. Genet.">
        <title>Characterisation of the growth regulating gene IMP3, a candidate for Silver-Russell syndrome.</title>
        <authorList>
            <person name="Monk D."/>
            <person name="Bentley L."/>
            <person name="Beechey C."/>
            <person name="Hitchins M."/>
            <person name="Peters J."/>
            <person name="Preece M.A."/>
            <person name="Stanier P."/>
            <person name="Moore G.E."/>
        </authorList>
    </citation>
    <scope>TISSUE SPECIFICITY</scope>
</reference>
<reference key="8">
    <citation type="journal article" date="2003" name="Biochem. J.">
        <title>Nuclear transit of human zipcode-binding protein IMP1.</title>
        <authorList>
            <person name="Nielsen J."/>
            <person name="Adolph S.K."/>
            <person name="Rajpert-De Meyts E."/>
            <person name="Lykke-Andersen J."/>
            <person name="Koch G."/>
            <person name="Christiansen J."/>
            <person name="Nielsen F.C."/>
        </authorList>
    </citation>
    <scope>SUBCELLULAR LOCATION</scope>
</reference>
<reference key="9">
    <citation type="journal article" date="2004" name="Mol. Cell. Proteomics">
        <title>Phosphoproteomic analysis of the developing mouse brain.</title>
        <authorList>
            <person name="Ballif B.A."/>
            <person name="Villen J."/>
            <person name="Beausoleil S.A."/>
            <person name="Schwartz D."/>
            <person name="Gygi S.P."/>
        </authorList>
    </citation>
    <scope>PHOSPHORYLATION [LARGE SCALE ANALYSIS] AT SER-165</scope>
    <scope>IDENTIFICATION BY MASS SPECTROMETRY [LARGE SCALE ANALYSIS]</scope>
    <source>
        <tissue>Embryonic brain</tissue>
    </source>
</reference>
<reference key="10">
    <citation type="journal article" date="2005" name="Biol. Cell">
        <title>VICKZ proteins: a multi-talented family of regulatory RNA-binding proteins.</title>
        <authorList>
            <person name="Yisraeli J.K."/>
        </authorList>
    </citation>
    <scope>REVIEW</scope>
</reference>
<reference key="11">
    <citation type="journal article" date="2005" name="J. Biol. Chem.">
        <title>The RNA-binding protein IMP-3 is a translational activator of insulin-like growth factor II leader-3 mRNA during proliferation of human K562 leukemia cells.</title>
        <authorList>
            <person name="Liao B."/>
            <person name="Hu Y."/>
            <person name="Herrick D.J."/>
            <person name="Brewer G."/>
        </authorList>
    </citation>
    <scope>FUNCTION</scope>
    <scope>RNA-BINDING</scope>
</reference>
<reference key="12">
    <citation type="journal article" date="2005" name="Reproduction">
        <title>Expression of IGF-II mRNA-binding proteins (IMPs) in gonads and testicular cancer.</title>
        <authorList>
            <person name="Hammer N.A."/>
            <person name="Hansen T.O."/>
            <person name="Byskov A.G."/>
            <person name="Rajpert-De Meyts E."/>
            <person name="Groendahl M.L."/>
            <person name="Bredkjaer H.E."/>
            <person name="Wewer U.M."/>
            <person name="Christiansen J."/>
            <person name="Nielsen F.C."/>
        </authorList>
    </citation>
    <scope>DEVELOPMENTAL STAGE</scope>
    <scope>TISSUE SPECIFICITY</scope>
</reference>
<reference key="13">
    <citation type="journal article" date="2009" name="Mol. Cell. Proteomics">
        <title>Large scale localization of protein phosphorylation by use of electron capture dissociation mass spectrometry.</title>
        <authorList>
            <person name="Sweet S.M."/>
            <person name="Bailey C.M."/>
            <person name="Cunningham D.L."/>
            <person name="Heath J.K."/>
            <person name="Cooper H.J."/>
        </authorList>
    </citation>
    <scope>PHOSPHORYLATION [LARGE SCALE ANALYSIS] AT SER-165</scope>
    <scope>IDENTIFICATION BY MASS SPECTROMETRY [LARGE SCALE ANALYSIS]</scope>
    <source>
        <tissue>Embryonic fibroblast</tissue>
    </source>
</reference>
<reference key="14">
    <citation type="journal article" date="2010" name="Cell">
        <title>A tissue-specific atlas of mouse protein phosphorylation and expression.</title>
        <authorList>
            <person name="Huttlin E.L."/>
            <person name="Jedrychowski M.P."/>
            <person name="Elias J.E."/>
            <person name="Goswami T."/>
            <person name="Rad R."/>
            <person name="Beausoleil S.A."/>
            <person name="Villen J."/>
            <person name="Haas W."/>
            <person name="Sowa M.E."/>
            <person name="Gygi S.P."/>
        </authorList>
    </citation>
    <scope>PHOSPHORYLATION [LARGE SCALE ANALYSIS] AT SER-165 AND THR-528</scope>
    <scope>IDENTIFICATION BY MASS SPECTROMETRY [LARGE SCALE ANALYSIS]</scope>
    <source>
        <tissue>Liver</tissue>
        <tissue>Pancreas</tissue>
        <tissue>Testis</tissue>
    </source>
</reference>
<reference key="15">
    <citation type="journal article" date="2013" name="Genes Dev.">
        <title>mTOR complex 2 phosphorylates IMP1 cotranslationally to promote IGF2 production and the proliferation of mouse embryonic fibroblasts.</title>
        <authorList>
            <person name="Dai N."/>
            <person name="Christiansen J."/>
            <person name="Nielsen F.C."/>
            <person name="Avruch J."/>
        </authorList>
    </citation>
    <scope>PHOSPHORYLATION AT SER-184</scope>
    <scope>MUTAGENESIS OF SER-184</scope>
</reference>
<sequence>MNKLYIGNLSDHAGPADLESVFKDAKIPVAGPFLVKTGYAFVDCPDEGWALKAIEALSGKMELHGKPMEVEHSVPKRQRIRKLQIRNIPPHLQWEVLDSLLVQYGVVESCEQVNTDSETAVVNVTYSSKDQARQALDKLNGFQLENFTLKVAYIPDETAAQQNPSPQLRGRRGPGQRGSSRQASPGSVSKQKPCDLPLRLLVPTQFVGAIIGKEGATIRNITKQTQSKIDVHRKENTGAAEKSITILSTPEGTSAACKSILEIMHKEAQDIKFTEEIPLKILAHNNFVGRLIGKEGRNLKKIEQDTDTKITISPLQELTLYNPERTITVKGSVETCAKAEEEIMKKIRESYENDIASMNLQAHLIPGLNLNALGLFPPTSGMPPPTSGPPSTLTPPYPQFEQSETETVHLFIPALSVGAIIGKQGQHIKQLSRFAGASIKIAPAEAPDAKVRMVIITGPPEAQFKAQGRIYGKIKEENFVSPKEEVKLEAHIRVPSFAAGRVIGKGGKTVNELQSLSSAEVVVPRDQTPDENDQVVVKITGHFYACQVAQRKIQEILTQVKQHQQQKALQSGPPQSRRK</sequence>
<feature type="chain" id="PRO_0000282539" description="Insulin-like growth factor 2 mRNA-binding protein 3">
    <location>
        <begin position="1"/>
        <end position="579"/>
    </location>
</feature>
<feature type="domain" description="RRM 1" evidence="4">
    <location>
        <begin position="2"/>
        <end position="75"/>
    </location>
</feature>
<feature type="domain" description="RRM 2" evidence="4">
    <location>
        <begin position="81"/>
        <end position="156"/>
    </location>
</feature>
<feature type="domain" description="KH 1" evidence="3">
    <location>
        <begin position="195"/>
        <end position="260"/>
    </location>
</feature>
<feature type="domain" description="KH 2" evidence="3">
    <location>
        <begin position="276"/>
        <end position="343"/>
    </location>
</feature>
<feature type="domain" description="KH 3" evidence="3">
    <location>
        <begin position="405"/>
        <end position="470"/>
    </location>
</feature>
<feature type="domain" description="KH 4" evidence="3">
    <location>
        <begin position="487"/>
        <end position="553"/>
    </location>
</feature>
<feature type="region of interest" description="Disordered" evidence="5">
    <location>
        <begin position="158"/>
        <end position="192"/>
    </location>
</feature>
<feature type="modified residue" description="Phosphoserine" evidence="16 17 18">
    <location>
        <position position="165"/>
    </location>
</feature>
<feature type="modified residue" description="Phosphoserine; by MTOR" evidence="13">
    <location>
        <position position="184"/>
    </location>
</feature>
<feature type="modified residue" description="Phosphothreonine" evidence="18">
    <location>
        <position position="528"/>
    </location>
</feature>
<feature type="cross-link" description="Glycyl lysine isopeptide (Lys-Gly) (interchain with G-Cter in SUMO2)" evidence="2">
    <location>
        <position position="450"/>
    </location>
</feature>
<feature type="cross-link" description="Glycyl lysine isopeptide (Lys-Gly) (interchain with G-Cter in SUMO2)" evidence="2">
    <location>
        <position position="475"/>
    </location>
</feature>
<feature type="mutagenesis site" description="Abolished phosphorylation by MTOR." evidence="13">
    <original>S</original>
    <variation>A</variation>
    <location>
        <position position="184"/>
    </location>
</feature>
<feature type="sequence conflict" description="In Ref. 1; BAE27710." evidence="15" ref="1">
    <original>Q</original>
    <variation>R</variation>
    <location>
        <position position="161"/>
    </location>
</feature>
<feature type="sequence conflict" description="In Ref. 1; BAC40370." evidence="15" ref="1">
    <original>H</original>
    <variation>N</variation>
    <location>
        <position position="363"/>
    </location>
</feature>
<feature type="sequence conflict" description="In Ref. 1; BAE27710." evidence="15" ref="1">
    <original>P</original>
    <variation>H</variation>
    <location>
        <position position="574"/>
    </location>
</feature>
<feature type="strand" evidence="20">
    <location>
        <begin position="3"/>
        <end position="8"/>
    </location>
</feature>
<feature type="helix" evidence="20">
    <location>
        <begin position="15"/>
        <end position="24"/>
    </location>
</feature>
<feature type="strand" evidence="20">
    <location>
        <begin position="40"/>
        <end position="43"/>
    </location>
</feature>
<feature type="helix" evidence="20">
    <location>
        <begin position="47"/>
        <end position="57"/>
    </location>
</feature>
<feature type="turn" evidence="20">
    <location>
        <begin position="58"/>
        <end position="60"/>
    </location>
</feature>
<feature type="strand" evidence="20">
    <location>
        <begin position="69"/>
        <end position="72"/>
    </location>
</feature>
<feature type="helix" evidence="20">
    <location>
        <begin position="76"/>
        <end position="78"/>
    </location>
</feature>
<feature type="strand" evidence="20">
    <location>
        <begin position="80"/>
        <end position="88"/>
    </location>
</feature>
<feature type="helix" evidence="20">
    <location>
        <begin position="94"/>
        <end position="101"/>
    </location>
</feature>
<feature type="helix" evidence="19">
    <location>
        <begin position="102"/>
        <end position="104"/>
    </location>
</feature>
<feature type="strand" evidence="20">
    <location>
        <begin position="107"/>
        <end position="112"/>
    </location>
</feature>
<feature type="strand" evidence="20">
    <location>
        <begin position="116"/>
        <end position="128"/>
    </location>
</feature>
<feature type="helix" evidence="20">
    <location>
        <begin position="129"/>
        <end position="139"/>
    </location>
</feature>
<feature type="strand" evidence="20">
    <location>
        <begin position="150"/>
        <end position="153"/>
    </location>
</feature>
<feature type="strand" evidence="21">
    <location>
        <begin position="198"/>
        <end position="203"/>
    </location>
</feature>
<feature type="helix" evidence="21">
    <location>
        <begin position="204"/>
        <end position="206"/>
    </location>
</feature>
<feature type="helix" evidence="21">
    <location>
        <begin position="207"/>
        <end position="211"/>
    </location>
</feature>
<feature type="helix" evidence="21">
    <location>
        <begin position="213"/>
        <end position="215"/>
    </location>
</feature>
<feature type="helix" evidence="21">
    <location>
        <begin position="216"/>
        <end position="225"/>
    </location>
</feature>
<feature type="strand" evidence="21">
    <location>
        <begin position="228"/>
        <end position="231"/>
    </location>
</feature>
<feature type="turn" evidence="21">
    <location>
        <begin position="237"/>
        <end position="240"/>
    </location>
</feature>
<feature type="strand" evidence="21">
    <location>
        <begin position="241"/>
        <end position="248"/>
    </location>
</feature>
<feature type="helix" evidence="21">
    <location>
        <begin position="250"/>
        <end position="270"/>
    </location>
</feature>
<feature type="strand" evidence="21">
    <location>
        <begin position="279"/>
        <end position="284"/>
    </location>
</feature>
<feature type="helix" evidence="21">
    <location>
        <begin position="285"/>
        <end position="287"/>
    </location>
</feature>
<feature type="helix" evidence="21">
    <location>
        <begin position="288"/>
        <end position="292"/>
    </location>
</feature>
<feature type="helix" evidence="21">
    <location>
        <begin position="294"/>
        <end position="296"/>
    </location>
</feature>
<feature type="helix" evidence="21">
    <location>
        <begin position="297"/>
        <end position="306"/>
    </location>
</feature>
<feature type="strand" evidence="21">
    <location>
        <begin position="309"/>
        <end position="312"/>
    </location>
</feature>
<feature type="helix" evidence="21">
    <location>
        <begin position="315"/>
        <end position="317"/>
    </location>
</feature>
<feature type="strand" evidence="21">
    <location>
        <begin position="324"/>
        <end position="331"/>
    </location>
</feature>
<feature type="helix" evidence="21">
    <location>
        <begin position="333"/>
        <end position="353"/>
    </location>
</feature>
<dbReference type="EMBL" id="AK088465">
    <property type="protein sequence ID" value="BAC40370.1"/>
    <property type="molecule type" value="mRNA"/>
</dbReference>
<dbReference type="EMBL" id="AK011689">
    <property type="protein sequence ID" value="BAB27779.1"/>
    <property type="molecule type" value="mRNA"/>
</dbReference>
<dbReference type="EMBL" id="AK147140">
    <property type="protein sequence ID" value="BAE27710.1"/>
    <property type="molecule type" value="mRNA"/>
</dbReference>
<dbReference type="EMBL" id="BC045138">
    <property type="protein sequence ID" value="AAH45138.1"/>
    <property type="molecule type" value="mRNA"/>
</dbReference>
<dbReference type="EMBL" id="BC049082">
    <property type="protein sequence ID" value="AAH49082.1"/>
    <property type="molecule type" value="mRNA"/>
</dbReference>
<dbReference type="CCDS" id="CCDS39485.1"/>
<dbReference type="RefSeq" id="NP_076159.3">
    <property type="nucleotide sequence ID" value="NM_023670.3"/>
</dbReference>
<dbReference type="PDB" id="7VKL">
    <property type="method" value="X-ray"/>
    <property type="resolution" value="1.95 A"/>
    <property type="chains" value="A=192-355"/>
</dbReference>
<dbReference type="PDB" id="7VSJ">
    <property type="method" value="X-ray"/>
    <property type="resolution" value="2.38 A"/>
    <property type="chains" value="A=1-161"/>
</dbReference>
<dbReference type="PDB" id="7YEW">
    <property type="method" value="X-ray"/>
    <property type="resolution" value="2.50 A"/>
    <property type="chains" value="A/C=1-161"/>
</dbReference>
<dbReference type="PDB" id="7YEX">
    <property type="method" value="X-ray"/>
    <property type="resolution" value="2.00 A"/>
    <property type="chains" value="A=1-160"/>
</dbReference>
<dbReference type="PDB" id="7YEY">
    <property type="method" value="X-ray"/>
    <property type="resolution" value="1.85 A"/>
    <property type="chains" value="A=192-355"/>
</dbReference>
<dbReference type="PDBsum" id="7VKL"/>
<dbReference type="PDBsum" id="7VSJ"/>
<dbReference type="PDBsum" id="7YEW"/>
<dbReference type="PDBsum" id="7YEX"/>
<dbReference type="PDBsum" id="7YEY"/>
<dbReference type="SMR" id="Q9CPN8"/>
<dbReference type="BioGRID" id="228262">
    <property type="interactions" value="7"/>
</dbReference>
<dbReference type="FunCoup" id="Q9CPN8">
    <property type="interactions" value="2391"/>
</dbReference>
<dbReference type="IntAct" id="Q9CPN8">
    <property type="interactions" value="3"/>
</dbReference>
<dbReference type="MINT" id="Q9CPN8"/>
<dbReference type="STRING" id="10090.ENSMUSP00000031838"/>
<dbReference type="GlyGen" id="Q9CPN8">
    <property type="glycosylation" value="2 sites, 1 O-linked glycan (1 site)"/>
</dbReference>
<dbReference type="iPTMnet" id="Q9CPN8"/>
<dbReference type="PhosphoSitePlus" id="Q9CPN8"/>
<dbReference type="SwissPalm" id="Q9CPN8"/>
<dbReference type="jPOST" id="Q9CPN8"/>
<dbReference type="PaxDb" id="10090-ENSMUSP00000031838"/>
<dbReference type="PeptideAtlas" id="Q9CPN8"/>
<dbReference type="ProteomicsDB" id="267095"/>
<dbReference type="Pumba" id="Q9CPN8"/>
<dbReference type="Antibodypedia" id="1056">
    <property type="antibodies" value="431 antibodies from 39 providers"/>
</dbReference>
<dbReference type="DNASU" id="140488"/>
<dbReference type="Ensembl" id="ENSMUST00000031838.9">
    <property type="protein sequence ID" value="ENSMUSP00000031838.8"/>
    <property type="gene ID" value="ENSMUSG00000029814.11"/>
</dbReference>
<dbReference type="GeneID" id="140488"/>
<dbReference type="KEGG" id="mmu:140488"/>
<dbReference type="UCSC" id="uc009bwi.2">
    <property type="organism name" value="mouse"/>
</dbReference>
<dbReference type="AGR" id="MGI:1890359"/>
<dbReference type="CTD" id="10643"/>
<dbReference type="MGI" id="MGI:1890359">
    <property type="gene designation" value="Igf2bp3"/>
</dbReference>
<dbReference type="VEuPathDB" id="HostDB:ENSMUSG00000029814"/>
<dbReference type="eggNOG" id="KOG2193">
    <property type="taxonomic scope" value="Eukaryota"/>
</dbReference>
<dbReference type="GeneTree" id="ENSGT00940000154957"/>
<dbReference type="HOGENOM" id="CLU_020744_1_0_1"/>
<dbReference type="InParanoid" id="Q9CPN8"/>
<dbReference type="OMA" id="CPDEGWA"/>
<dbReference type="OrthoDB" id="752362at2759"/>
<dbReference type="PhylomeDB" id="Q9CPN8"/>
<dbReference type="TreeFam" id="TF320229"/>
<dbReference type="BioGRID-ORCS" id="140488">
    <property type="hits" value="1 hit in 80 CRISPR screens"/>
</dbReference>
<dbReference type="CD-CODE" id="DE1E139C">
    <property type="entry name" value="Chromatoid body"/>
</dbReference>
<dbReference type="ChiTaRS" id="Igf2bp3">
    <property type="organism name" value="mouse"/>
</dbReference>
<dbReference type="PRO" id="PR:Q9CPN8"/>
<dbReference type="Proteomes" id="UP000000589">
    <property type="component" value="Chromosome 6"/>
</dbReference>
<dbReference type="RNAct" id="Q9CPN8">
    <property type="molecule type" value="protein"/>
</dbReference>
<dbReference type="Bgee" id="ENSMUSG00000029814">
    <property type="expression patterns" value="Expressed in primitive streak and 168 other cell types or tissues"/>
</dbReference>
<dbReference type="GO" id="GO:0010494">
    <property type="term" value="C:cytoplasmic stress granule"/>
    <property type="evidence" value="ECO:0000250"/>
    <property type="project" value="UniProtKB"/>
</dbReference>
<dbReference type="GO" id="GO:0005829">
    <property type="term" value="C:cytosol"/>
    <property type="evidence" value="ECO:0007669"/>
    <property type="project" value="Ensembl"/>
</dbReference>
<dbReference type="GO" id="GO:0005634">
    <property type="term" value="C:nucleus"/>
    <property type="evidence" value="ECO:0007669"/>
    <property type="project" value="UniProtKB-SubCell"/>
</dbReference>
<dbReference type="GO" id="GO:0000932">
    <property type="term" value="C:P-body"/>
    <property type="evidence" value="ECO:0000250"/>
    <property type="project" value="UniProtKB"/>
</dbReference>
<dbReference type="GO" id="GO:0003730">
    <property type="term" value="F:mRNA 3'-UTR binding"/>
    <property type="evidence" value="ECO:0000250"/>
    <property type="project" value="UniProtKB"/>
</dbReference>
<dbReference type="GO" id="GO:0048027">
    <property type="term" value="F:mRNA 5'-UTR binding"/>
    <property type="evidence" value="ECO:0007669"/>
    <property type="project" value="Ensembl"/>
</dbReference>
<dbReference type="GO" id="GO:1990247">
    <property type="term" value="F:N6-methyladenosine-containing RNA reader activity"/>
    <property type="evidence" value="ECO:0000250"/>
    <property type="project" value="UniProtKB"/>
</dbReference>
<dbReference type="GO" id="GO:0070934">
    <property type="term" value="P:CRD-mediated mRNA stabilization"/>
    <property type="evidence" value="ECO:0000250"/>
    <property type="project" value="UniProtKB"/>
</dbReference>
<dbReference type="GO" id="GO:0051028">
    <property type="term" value="P:mRNA transport"/>
    <property type="evidence" value="ECO:0007669"/>
    <property type="project" value="UniProtKB-KW"/>
</dbReference>
<dbReference type="GO" id="GO:0006417">
    <property type="term" value="P:regulation of translation"/>
    <property type="evidence" value="ECO:0007669"/>
    <property type="project" value="UniProtKB-KW"/>
</dbReference>
<dbReference type="CDD" id="cd22492">
    <property type="entry name" value="KH-I_IGF2BP3_rpt1"/>
    <property type="match status" value="1"/>
</dbReference>
<dbReference type="CDD" id="cd22498">
    <property type="entry name" value="KH-I_IGF2BP3_rpt3"/>
    <property type="match status" value="1"/>
</dbReference>
<dbReference type="CDD" id="cd12630">
    <property type="entry name" value="RRM2_IGF2BP3"/>
    <property type="match status" value="1"/>
</dbReference>
<dbReference type="FunFam" id="3.30.70.330:FF:000203">
    <property type="entry name" value="insulin-like growth factor 2 mRNA-binding protein 1"/>
    <property type="match status" value="1"/>
</dbReference>
<dbReference type="FunFam" id="3.30.310.210:FF:000001">
    <property type="entry name" value="insulin-like growth factor 2 mRNA-binding protein 1 isoform X1"/>
    <property type="match status" value="1"/>
</dbReference>
<dbReference type="FunFam" id="3.30.1370.10:FF:000026">
    <property type="entry name" value="Insulin-like growth factor 2 mRNA-binding protein 3"/>
    <property type="match status" value="1"/>
</dbReference>
<dbReference type="FunFam" id="3.30.1370.10:FF:000027">
    <property type="entry name" value="insulin-like growth factor 2 mRNA-binding protein 3 isoform X1"/>
    <property type="match status" value="1"/>
</dbReference>
<dbReference type="FunFam" id="3.30.70.330:FF:000099">
    <property type="entry name" value="insulin-like growth factor 2 mRNA-binding protein 3 isoform X1"/>
    <property type="match status" value="1"/>
</dbReference>
<dbReference type="Gene3D" id="3.30.310.210">
    <property type="match status" value="1"/>
</dbReference>
<dbReference type="Gene3D" id="3.30.70.330">
    <property type="match status" value="2"/>
</dbReference>
<dbReference type="Gene3D" id="3.30.1370.10">
    <property type="entry name" value="K Homology domain, type 1"/>
    <property type="match status" value="2"/>
</dbReference>
<dbReference type="InterPro" id="IPR004087">
    <property type="entry name" value="KH_dom"/>
</dbReference>
<dbReference type="InterPro" id="IPR004088">
    <property type="entry name" value="KH_dom_type_1"/>
</dbReference>
<dbReference type="InterPro" id="IPR036612">
    <property type="entry name" value="KH_dom_type_1_sf"/>
</dbReference>
<dbReference type="InterPro" id="IPR012677">
    <property type="entry name" value="Nucleotide-bd_a/b_plait_sf"/>
</dbReference>
<dbReference type="InterPro" id="IPR035979">
    <property type="entry name" value="RBD_domain_sf"/>
</dbReference>
<dbReference type="InterPro" id="IPR000504">
    <property type="entry name" value="RRM_dom"/>
</dbReference>
<dbReference type="PANTHER" id="PTHR10288">
    <property type="entry name" value="KH DOMAIN CONTAINING RNA BINDING PROTEIN"/>
    <property type="match status" value="1"/>
</dbReference>
<dbReference type="Pfam" id="PF00013">
    <property type="entry name" value="KH_1"/>
    <property type="match status" value="4"/>
</dbReference>
<dbReference type="Pfam" id="PF00076">
    <property type="entry name" value="RRM_1"/>
    <property type="match status" value="1"/>
</dbReference>
<dbReference type="SMART" id="SM00322">
    <property type="entry name" value="KH"/>
    <property type="match status" value="4"/>
</dbReference>
<dbReference type="SMART" id="SM00360">
    <property type="entry name" value="RRM"/>
    <property type="match status" value="2"/>
</dbReference>
<dbReference type="SUPFAM" id="SSF54791">
    <property type="entry name" value="Eukaryotic type KH-domain (KH-domain type I)"/>
    <property type="match status" value="4"/>
</dbReference>
<dbReference type="SUPFAM" id="SSF54928">
    <property type="entry name" value="RNA-binding domain, RBD"/>
    <property type="match status" value="1"/>
</dbReference>
<dbReference type="PROSITE" id="PS50084">
    <property type="entry name" value="KH_TYPE_1"/>
    <property type="match status" value="4"/>
</dbReference>
<dbReference type="PROSITE" id="PS50102">
    <property type="entry name" value="RRM"/>
    <property type="match status" value="2"/>
</dbReference>
<comment type="function">
    <text evidence="2 11">RNA-binding factor that may recruit target transcripts to cytoplasmic protein-RNA complexes (mRNPs). This transcript 'caging' into mRNPs allows mRNA transport and transient storage. It also modulates the rate and location at which target transcripts encounter the translational apparatus and shields them from endonuclease attacks or microRNA-mediated degradation. Preferentially binds to N6-methyladenosine (m6A)-containing mRNAs and increases their stability (By similarity). Binds to the 3'-UTR of CD44 mRNA and stabilizes it, hence promotes cell adhesion and invadopodia formation (By similarity). Binds to beta-actin/ACTB and MYC transcripts (By similarity). Increases MYC mRNA stability by binding to the coding region instability determinant (CRD) and binding is enhanced by m6A-modification of the CRD (By similarity). Binds to the 5'-UTR of the insulin-like growth factor 2 (IGF2) mRNAs.</text>
</comment>
<comment type="subunit">
    <text evidence="2">Can form homooligomers and heterooligomers with IGF2BP1 and IGF2BP3 in an RNA-dependent manner. Interacts with IGF2BP1. Interacts with ELAVL1, DHX9, HNRNPU, MATR3 and PABPC1.</text>
</comment>
<comment type="subcellular location">
    <subcellularLocation>
        <location evidence="8 10">Nucleus</location>
    </subcellularLocation>
    <subcellularLocation>
        <location evidence="1">Cytoplasm</location>
    </subcellularLocation>
    <subcellularLocation>
        <location evidence="2">Cytoplasm</location>
        <location evidence="2">P-body</location>
    </subcellularLocation>
    <subcellularLocation>
        <location evidence="2">Cytoplasm</location>
        <location evidence="2">Stress granule</location>
    </subcellularLocation>
    <text evidence="1">Found in lamellipodia of the leading edge, in the perinuclear region, and beneath the plasma membrane. The subcytoplasmic localization is cell specific and regulated by cell contact and growth. Localized at the connecting piece and the tail of the spermatozoa. In response to cellular stress, such as oxidative stress, recruited to stress granules.</text>
</comment>
<comment type="tissue specificity">
    <text evidence="6 9 12">Expressed in oocytes, spermatogonia and spermatocytes (at protein level).</text>
</comment>
<comment type="developmental stage">
    <text evidence="7 8 12 14">Expressed in zygotes and blastocysts (at protein level). Expressed in gonads at 12.5 and 14.5 dpc (at protein level). Expressed in germ cells at 16.5 dpc (at protein level). Expressed in brain at 10.5 dpc and declining towards birth (at protein level). Expressed during fetal development at 7, 9.5, 10.5, 12.5, 14.5 and 17.5 dpc and declining towards birth.</text>
</comment>
<comment type="domain">
    <text evidence="2">All KH domains contribute binding to target mRNA. Domains KH3 and KH4 are the major RNA-binding modules, although KH1 and KH2 also contribute. The KH domains are also required for RNA-dependent homo- and heterooligomerization. The integrity of KH domains seems not to be required for localization to stress granules.</text>
</comment>
<comment type="similarity">
    <text evidence="15">Belongs to the RRM IMP/VICKZ family.</text>
</comment>
<organism>
    <name type="scientific">Mus musculus</name>
    <name type="common">Mouse</name>
    <dbReference type="NCBI Taxonomy" id="10090"/>
    <lineage>
        <taxon>Eukaryota</taxon>
        <taxon>Metazoa</taxon>
        <taxon>Chordata</taxon>
        <taxon>Craniata</taxon>
        <taxon>Vertebrata</taxon>
        <taxon>Euteleostomi</taxon>
        <taxon>Mammalia</taxon>
        <taxon>Eutheria</taxon>
        <taxon>Euarchontoglires</taxon>
        <taxon>Glires</taxon>
        <taxon>Rodentia</taxon>
        <taxon>Myomorpha</taxon>
        <taxon>Muroidea</taxon>
        <taxon>Muridae</taxon>
        <taxon>Murinae</taxon>
        <taxon>Mus</taxon>
        <taxon>Mus</taxon>
    </lineage>
</organism>
<evidence type="ECO:0000250" key="1"/>
<evidence type="ECO:0000250" key="2">
    <source>
        <dbReference type="UniProtKB" id="O00425"/>
    </source>
</evidence>
<evidence type="ECO:0000255" key="3">
    <source>
        <dbReference type="PROSITE-ProRule" id="PRU00117"/>
    </source>
</evidence>
<evidence type="ECO:0000255" key="4">
    <source>
        <dbReference type="PROSITE-ProRule" id="PRU00176"/>
    </source>
</evidence>
<evidence type="ECO:0000256" key="5">
    <source>
        <dbReference type="SAM" id="MobiDB-lite"/>
    </source>
</evidence>
<evidence type="ECO:0000269" key="6">
    <source>
    </source>
</evidence>
<evidence type="ECO:0000269" key="7">
    <source>
    </source>
</evidence>
<evidence type="ECO:0000269" key="8">
    <source>
    </source>
</evidence>
<evidence type="ECO:0000269" key="9">
    <source>
    </source>
</evidence>
<evidence type="ECO:0000269" key="10">
    <source>
    </source>
</evidence>
<evidence type="ECO:0000269" key="11">
    <source>
    </source>
</evidence>
<evidence type="ECO:0000269" key="12">
    <source>
    </source>
</evidence>
<evidence type="ECO:0000269" key="13">
    <source>
    </source>
</evidence>
<evidence type="ECO:0000269" key="14">
    <source>
    </source>
</evidence>
<evidence type="ECO:0000305" key="15"/>
<evidence type="ECO:0007744" key="16">
    <source>
    </source>
</evidence>
<evidence type="ECO:0007744" key="17">
    <source>
    </source>
</evidence>
<evidence type="ECO:0007744" key="18">
    <source>
    </source>
</evidence>
<evidence type="ECO:0007829" key="19">
    <source>
        <dbReference type="PDB" id="7YEW"/>
    </source>
</evidence>
<evidence type="ECO:0007829" key="20">
    <source>
        <dbReference type="PDB" id="7YEX"/>
    </source>
</evidence>
<evidence type="ECO:0007829" key="21">
    <source>
        <dbReference type="PDB" id="7YEY"/>
    </source>
</evidence>
<proteinExistence type="evidence at protein level"/>
<accession>Q9CPN8</accession>
<accession>Q3UHZ6</accession>
<accession>Q8C2J9</accession>
<keyword id="KW-0002">3D-structure</keyword>
<keyword id="KW-0963">Cytoplasm</keyword>
<keyword id="KW-1017">Isopeptide bond</keyword>
<keyword id="KW-0509">mRNA transport</keyword>
<keyword id="KW-0539">Nucleus</keyword>
<keyword id="KW-0597">Phosphoprotein</keyword>
<keyword id="KW-1185">Reference proteome</keyword>
<keyword id="KW-0677">Repeat</keyword>
<keyword id="KW-0694">RNA-binding</keyword>
<keyword id="KW-0810">Translation regulation</keyword>
<keyword id="KW-0813">Transport</keyword>
<keyword id="KW-0832">Ubl conjugation</keyword>
<name>IF2B3_MOUSE</name>
<gene>
    <name type="primary">Igf2bp3</name>
    <name type="synonym">Vickz3</name>
</gene>